<proteinExistence type="inferred from homology"/>
<evidence type="ECO:0000255" key="1">
    <source>
        <dbReference type="HAMAP-Rule" id="MF_01332"/>
    </source>
</evidence>
<feature type="signal peptide" evidence="1">
    <location>
        <begin position="1"/>
        <end position="37"/>
    </location>
</feature>
<feature type="chain" id="PRO_1000142336" description="Secretion monitor">
    <location>
        <begin position="38"/>
        <end position="170"/>
    </location>
</feature>
<gene>
    <name evidence="1" type="primary">secM</name>
    <name type="ordered locus">ECIAI1_0097</name>
</gene>
<protein>
    <recommendedName>
        <fullName evidence="1">Secretion monitor</fullName>
    </recommendedName>
</protein>
<keyword id="KW-0963">Cytoplasm</keyword>
<keyword id="KW-0574">Periplasm</keyword>
<keyword id="KW-0732">Signal</keyword>
<dbReference type="EMBL" id="CU928160">
    <property type="protein sequence ID" value="CAQ96986.1"/>
    <property type="molecule type" value="Genomic_DNA"/>
</dbReference>
<dbReference type="RefSeq" id="WP_000014321.1">
    <property type="nucleotide sequence ID" value="NC_011741.1"/>
</dbReference>
<dbReference type="SMR" id="B7M140"/>
<dbReference type="GeneID" id="93777337"/>
<dbReference type="KEGG" id="ecr:ECIAI1_0097"/>
<dbReference type="HOGENOM" id="CLU_108853_0_0_6"/>
<dbReference type="GO" id="GO:0005829">
    <property type="term" value="C:cytosol"/>
    <property type="evidence" value="ECO:0007669"/>
    <property type="project" value="UniProtKB-SubCell"/>
</dbReference>
<dbReference type="GO" id="GO:0042597">
    <property type="term" value="C:periplasmic space"/>
    <property type="evidence" value="ECO:0007669"/>
    <property type="project" value="UniProtKB-SubCell"/>
</dbReference>
<dbReference type="GO" id="GO:0045182">
    <property type="term" value="F:translation regulator activity"/>
    <property type="evidence" value="ECO:0007669"/>
    <property type="project" value="InterPro"/>
</dbReference>
<dbReference type="HAMAP" id="MF_01332">
    <property type="entry name" value="SecM"/>
    <property type="match status" value="1"/>
</dbReference>
<dbReference type="InterPro" id="IPR009502">
    <property type="entry name" value="SecM"/>
</dbReference>
<dbReference type="NCBIfam" id="NF002799">
    <property type="entry name" value="PRK02943.1-1"/>
    <property type="match status" value="1"/>
</dbReference>
<dbReference type="Pfam" id="PF06558">
    <property type="entry name" value="SecM"/>
    <property type="match status" value="1"/>
</dbReference>
<dbReference type="PIRSF" id="PIRSF004572">
    <property type="entry name" value="SecM"/>
    <property type="match status" value="1"/>
</dbReference>
<reference key="1">
    <citation type="journal article" date="2009" name="PLoS Genet.">
        <title>Organised genome dynamics in the Escherichia coli species results in highly diverse adaptive paths.</title>
        <authorList>
            <person name="Touchon M."/>
            <person name="Hoede C."/>
            <person name="Tenaillon O."/>
            <person name="Barbe V."/>
            <person name="Baeriswyl S."/>
            <person name="Bidet P."/>
            <person name="Bingen E."/>
            <person name="Bonacorsi S."/>
            <person name="Bouchier C."/>
            <person name="Bouvet O."/>
            <person name="Calteau A."/>
            <person name="Chiapello H."/>
            <person name="Clermont O."/>
            <person name="Cruveiller S."/>
            <person name="Danchin A."/>
            <person name="Diard M."/>
            <person name="Dossat C."/>
            <person name="Karoui M.E."/>
            <person name="Frapy E."/>
            <person name="Garry L."/>
            <person name="Ghigo J.M."/>
            <person name="Gilles A.M."/>
            <person name="Johnson J."/>
            <person name="Le Bouguenec C."/>
            <person name="Lescat M."/>
            <person name="Mangenot S."/>
            <person name="Martinez-Jehanne V."/>
            <person name="Matic I."/>
            <person name="Nassif X."/>
            <person name="Oztas S."/>
            <person name="Petit M.A."/>
            <person name="Pichon C."/>
            <person name="Rouy Z."/>
            <person name="Ruf C.S."/>
            <person name="Schneider D."/>
            <person name="Tourret J."/>
            <person name="Vacherie B."/>
            <person name="Vallenet D."/>
            <person name="Medigue C."/>
            <person name="Rocha E.P.C."/>
            <person name="Denamur E."/>
        </authorList>
    </citation>
    <scope>NUCLEOTIDE SEQUENCE [LARGE SCALE GENOMIC DNA]</scope>
    <source>
        <strain>IAI1</strain>
    </source>
</reference>
<comment type="function">
    <text evidence="1">Regulates secA expression by translational coupling of the secM secA operon. Translational pausing at a specific Pro residue 5 residues before the end of the protein may allow disruption of a mRNA repressor helix that normally suppresses secA translation initiation.</text>
</comment>
<comment type="subcellular location">
    <subcellularLocation>
        <location evidence="1">Cytoplasm</location>
        <location evidence="1">Cytosol</location>
    </subcellularLocation>
    <subcellularLocation>
        <location evidence="1">Periplasm</location>
    </subcellularLocation>
    <text evidence="1">The active form is cytosolic, while the periplasmic form is rapidly degraded, mainly by the tail-specific protease.</text>
</comment>
<comment type="similarity">
    <text evidence="1">Belongs to the SecM family.</text>
</comment>
<name>SECM_ECO8A</name>
<accession>B7M140</accession>
<organism>
    <name type="scientific">Escherichia coli O8 (strain IAI1)</name>
    <dbReference type="NCBI Taxonomy" id="585034"/>
    <lineage>
        <taxon>Bacteria</taxon>
        <taxon>Pseudomonadati</taxon>
        <taxon>Pseudomonadota</taxon>
        <taxon>Gammaproteobacteria</taxon>
        <taxon>Enterobacterales</taxon>
        <taxon>Enterobacteriaceae</taxon>
        <taxon>Escherichia</taxon>
    </lineage>
</organism>
<sequence length="170" mass="18880">MSGILTRWRQFGKRYFWPHLLLGMVAASLGLPALSNAAEPNAPAKATTRNHEPSAKVNFGQLALLEANTRRPNSNYSVDYWHQHAIRTVIRHLSFAMAPQTLPVAEESLPLQAQHLALLDTLSALLTQEGTPSEKGYRIDYAHFTPQAKFSTPVWISQAQGIRAGPQRLT</sequence>